<proteinExistence type="inferred from homology"/>
<organism>
    <name type="scientific">Bacillus thuringiensis subsp. konkukian (strain 97-27)</name>
    <dbReference type="NCBI Taxonomy" id="281309"/>
    <lineage>
        <taxon>Bacteria</taxon>
        <taxon>Bacillati</taxon>
        <taxon>Bacillota</taxon>
        <taxon>Bacilli</taxon>
        <taxon>Bacillales</taxon>
        <taxon>Bacillaceae</taxon>
        <taxon>Bacillus</taxon>
        <taxon>Bacillus cereus group</taxon>
    </lineage>
</organism>
<name>RS19_BACHK</name>
<accession>Q6HPQ4</accession>
<feature type="chain" id="PRO_0000129777" description="Small ribosomal subunit protein uS19">
    <location>
        <begin position="1"/>
        <end position="92"/>
    </location>
</feature>
<sequence>MARSLKKGPFVDDHLMSKIAKLNETEQKQVVKTWSRRSTIFPQFIGHTIAVYDGRKHVPVYVTEDMVGHKLGEFAPTRTYKGHDADDKKTRR</sequence>
<protein>
    <recommendedName>
        <fullName evidence="1">Small ribosomal subunit protein uS19</fullName>
    </recommendedName>
    <alternativeName>
        <fullName evidence="2">30S ribosomal protein S19</fullName>
    </alternativeName>
</protein>
<comment type="function">
    <text evidence="1">Protein S19 forms a complex with S13 that binds strongly to the 16S ribosomal RNA.</text>
</comment>
<comment type="similarity">
    <text evidence="1">Belongs to the universal ribosomal protein uS19 family.</text>
</comment>
<keyword id="KW-0687">Ribonucleoprotein</keyword>
<keyword id="KW-0689">Ribosomal protein</keyword>
<keyword id="KW-0694">RNA-binding</keyword>
<keyword id="KW-0699">rRNA-binding</keyword>
<dbReference type="EMBL" id="AE017355">
    <property type="protein sequence ID" value="AAT61448.1"/>
    <property type="molecule type" value="Genomic_DNA"/>
</dbReference>
<dbReference type="RefSeq" id="WP_000124453.1">
    <property type="nucleotide sequence ID" value="NC_005957.1"/>
</dbReference>
<dbReference type="RefSeq" id="YP_034466.1">
    <property type="nucleotide sequence ID" value="NC_005957.1"/>
</dbReference>
<dbReference type="SMR" id="Q6HPQ4"/>
<dbReference type="GeneID" id="93010939"/>
<dbReference type="KEGG" id="btk:BT9727_0110"/>
<dbReference type="PATRIC" id="fig|281309.8.peg.111"/>
<dbReference type="HOGENOM" id="CLU_144911_0_1_9"/>
<dbReference type="Proteomes" id="UP000001301">
    <property type="component" value="Chromosome"/>
</dbReference>
<dbReference type="GO" id="GO:0005737">
    <property type="term" value="C:cytoplasm"/>
    <property type="evidence" value="ECO:0007669"/>
    <property type="project" value="UniProtKB-ARBA"/>
</dbReference>
<dbReference type="GO" id="GO:0015935">
    <property type="term" value="C:small ribosomal subunit"/>
    <property type="evidence" value="ECO:0007669"/>
    <property type="project" value="InterPro"/>
</dbReference>
<dbReference type="GO" id="GO:0019843">
    <property type="term" value="F:rRNA binding"/>
    <property type="evidence" value="ECO:0007669"/>
    <property type="project" value="UniProtKB-UniRule"/>
</dbReference>
<dbReference type="GO" id="GO:0003735">
    <property type="term" value="F:structural constituent of ribosome"/>
    <property type="evidence" value="ECO:0007669"/>
    <property type="project" value="InterPro"/>
</dbReference>
<dbReference type="GO" id="GO:0000028">
    <property type="term" value="P:ribosomal small subunit assembly"/>
    <property type="evidence" value="ECO:0007669"/>
    <property type="project" value="TreeGrafter"/>
</dbReference>
<dbReference type="GO" id="GO:0006412">
    <property type="term" value="P:translation"/>
    <property type="evidence" value="ECO:0007669"/>
    <property type="project" value="UniProtKB-UniRule"/>
</dbReference>
<dbReference type="FunFam" id="3.30.860.10:FF:000001">
    <property type="entry name" value="30S ribosomal protein S19"/>
    <property type="match status" value="1"/>
</dbReference>
<dbReference type="Gene3D" id="3.30.860.10">
    <property type="entry name" value="30s Ribosomal Protein S19, Chain A"/>
    <property type="match status" value="1"/>
</dbReference>
<dbReference type="HAMAP" id="MF_00531">
    <property type="entry name" value="Ribosomal_uS19"/>
    <property type="match status" value="1"/>
</dbReference>
<dbReference type="InterPro" id="IPR002222">
    <property type="entry name" value="Ribosomal_uS19"/>
</dbReference>
<dbReference type="InterPro" id="IPR005732">
    <property type="entry name" value="Ribosomal_uS19_bac-type"/>
</dbReference>
<dbReference type="InterPro" id="IPR020934">
    <property type="entry name" value="Ribosomal_uS19_CS"/>
</dbReference>
<dbReference type="InterPro" id="IPR023575">
    <property type="entry name" value="Ribosomal_uS19_SF"/>
</dbReference>
<dbReference type="NCBIfam" id="TIGR01050">
    <property type="entry name" value="rpsS_bact"/>
    <property type="match status" value="1"/>
</dbReference>
<dbReference type="PANTHER" id="PTHR11880">
    <property type="entry name" value="RIBOSOMAL PROTEIN S19P FAMILY MEMBER"/>
    <property type="match status" value="1"/>
</dbReference>
<dbReference type="PANTHER" id="PTHR11880:SF8">
    <property type="entry name" value="SMALL RIBOSOMAL SUBUNIT PROTEIN US19M"/>
    <property type="match status" value="1"/>
</dbReference>
<dbReference type="Pfam" id="PF00203">
    <property type="entry name" value="Ribosomal_S19"/>
    <property type="match status" value="1"/>
</dbReference>
<dbReference type="PIRSF" id="PIRSF002144">
    <property type="entry name" value="Ribosomal_S19"/>
    <property type="match status" value="1"/>
</dbReference>
<dbReference type="PRINTS" id="PR00975">
    <property type="entry name" value="RIBOSOMALS19"/>
</dbReference>
<dbReference type="SUPFAM" id="SSF54570">
    <property type="entry name" value="Ribosomal protein S19"/>
    <property type="match status" value="1"/>
</dbReference>
<dbReference type="PROSITE" id="PS00323">
    <property type="entry name" value="RIBOSOMAL_S19"/>
    <property type="match status" value="1"/>
</dbReference>
<reference key="1">
    <citation type="journal article" date="2006" name="J. Bacteriol.">
        <title>Pathogenomic sequence analysis of Bacillus cereus and Bacillus thuringiensis isolates closely related to Bacillus anthracis.</title>
        <authorList>
            <person name="Han C.S."/>
            <person name="Xie G."/>
            <person name="Challacombe J.F."/>
            <person name="Altherr M.R."/>
            <person name="Bhotika S.S."/>
            <person name="Bruce D."/>
            <person name="Campbell C.S."/>
            <person name="Campbell M.L."/>
            <person name="Chen J."/>
            <person name="Chertkov O."/>
            <person name="Cleland C."/>
            <person name="Dimitrijevic M."/>
            <person name="Doggett N.A."/>
            <person name="Fawcett J.J."/>
            <person name="Glavina T."/>
            <person name="Goodwin L.A."/>
            <person name="Hill K.K."/>
            <person name="Hitchcock P."/>
            <person name="Jackson P.J."/>
            <person name="Keim P."/>
            <person name="Kewalramani A.R."/>
            <person name="Longmire J."/>
            <person name="Lucas S."/>
            <person name="Malfatti S."/>
            <person name="McMurry K."/>
            <person name="Meincke L.J."/>
            <person name="Misra M."/>
            <person name="Moseman B.L."/>
            <person name="Mundt M."/>
            <person name="Munk A.C."/>
            <person name="Okinaka R.T."/>
            <person name="Parson-Quintana B."/>
            <person name="Reilly L.P."/>
            <person name="Richardson P."/>
            <person name="Robinson D.L."/>
            <person name="Rubin E."/>
            <person name="Saunders E."/>
            <person name="Tapia R."/>
            <person name="Tesmer J.G."/>
            <person name="Thayer N."/>
            <person name="Thompson L.S."/>
            <person name="Tice H."/>
            <person name="Ticknor L.O."/>
            <person name="Wills P.L."/>
            <person name="Brettin T.S."/>
            <person name="Gilna P."/>
        </authorList>
    </citation>
    <scope>NUCLEOTIDE SEQUENCE [LARGE SCALE GENOMIC DNA]</scope>
    <source>
        <strain>97-27</strain>
    </source>
</reference>
<evidence type="ECO:0000255" key="1">
    <source>
        <dbReference type="HAMAP-Rule" id="MF_00531"/>
    </source>
</evidence>
<evidence type="ECO:0000305" key="2"/>
<gene>
    <name evidence="1" type="primary">rpsS</name>
    <name type="ordered locus">BT9727_0110</name>
</gene>